<feature type="chain" id="PRO_0000272470" description="Phosphate import ATP-binding protein PstB 1">
    <location>
        <begin position="1"/>
        <end position="264"/>
    </location>
</feature>
<feature type="domain" description="ABC transporter" evidence="1">
    <location>
        <begin position="20"/>
        <end position="259"/>
    </location>
</feature>
<feature type="binding site" evidence="1">
    <location>
        <begin position="52"/>
        <end position="59"/>
    </location>
    <ligand>
        <name>ATP</name>
        <dbReference type="ChEBI" id="CHEBI:30616"/>
    </ligand>
</feature>
<name>PSTB1_LIGS1</name>
<accession>Q1WUX2</accession>
<sequence length="264" mass="30011">MEYNLKDKYILQLNEKEKALETRDLNIFYGEKQALFDGNLQFERYKITSLIGASGSGKSTFLRSLNRMNEGVADVKGSILYRGIDINSPKINVYEMRKYIGMVFQRPNPFSKSIYENITFALKENGIKDKEKLAEIVETSLKQAALWDEVKDDLNKSALALSGGQQQRLCIARAIAMKPDILLLDEPASALDPISTAKIEETLLELKEKYTLIIVTHNMQQASRISDYTAFFHLGNVIEYNKTKNIFTNPKIKLTEDYISGNFG</sequence>
<protein>
    <recommendedName>
        <fullName evidence="1">Phosphate import ATP-binding protein PstB 1</fullName>
        <ecNumber evidence="1">7.3.2.1</ecNumber>
    </recommendedName>
    <alternativeName>
        <fullName evidence="1">ABC phosphate transporter 1</fullName>
    </alternativeName>
    <alternativeName>
        <fullName evidence="1">Phosphate-transporting ATPase 1</fullName>
    </alternativeName>
</protein>
<dbReference type="EC" id="7.3.2.1" evidence="1"/>
<dbReference type="EMBL" id="CP000233">
    <property type="protein sequence ID" value="ABD99213.1"/>
    <property type="molecule type" value="Genomic_DNA"/>
</dbReference>
<dbReference type="RefSeq" id="YP_535296.1">
    <property type="nucleotide sequence ID" value="NC_007929.1"/>
</dbReference>
<dbReference type="SMR" id="Q1WUX2"/>
<dbReference type="STRING" id="362948.LSL_0403"/>
<dbReference type="KEGG" id="lsl:LSL_0403"/>
<dbReference type="PATRIC" id="fig|362948.14.peg.482"/>
<dbReference type="HOGENOM" id="CLU_000604_1_22_9"/>
<dbReference type="OrthoDB" id="9802185at2"/>
<dbReference type="Proteomes" id="UP000006559">
    <property type="component" value="Chromosome"/>
</dbReference>
<dbReference type="GO" id="GO:0005886">
    <property type="term" value="C:plasma membrane"/>
    <property type="evidence" value="ECO:0007669"/>
    <property type="project" value="UniProtKB-SubCell"/>
</dbReference>
<dbReference type="GO" id="GO:0005524">
    <property type="term" value="F:ATP binding"/>
    <property type="evidence" value="ECO:0007669"/>
    <property type="project" value="UniProtKB-KW"/>
</dbReference>
<dbReference type="GO" id="GO:0016887">
    <property type="term" value="F:ATP hydrolysis activity"/>
    <property type="evidence" value="ECO:0007669"/>
    <property type="project" value="InterPro"/>
</dbReference>
<dbReference type="GO" id="GO:0015415">
    <property type="term" value="F:ATPase-coupled phosphate ion transmembrane transporter activity"/>
    <property type="evidence" value="ECO:0007669"/>
    <property type="project" value="UniProtKB-EC"/>
</dbReference>
<dbReference type="GO" id="GO:0035435">
    <property type="term" value="P:phosphate ion transmembrane transport"/>
    <property type="evidence" value="ECO:0007669"/>
    <property type="project" value="InterPro"/>
</dbReference>
<dbReference type="CDD" id="cd03260">
    <property type="entry name" value="ABC_PstB_phosphate_transporter"/>
    <property type="match status" value="1"/>
</dbReference>
<dbReference type="Gene3D" id="3.40.50.300">
    <property type="entry name" value="P-loop containing nucleotide triphosphate hydrolases"/>
    <property type="match status" value="1"/>
</dbReference>
<dbReference type="InterPro" id="IPR003593">
    <property type="entry name" value="AAA+_ATPase"/>
</dbReference>
<dbReference type="InterPro" id="IPR003439">
    <property type="entry name" value="ABC_transporter-like_ATP-bd"/>
</dbReference>
<dbReference type="InterPro" id="IPR017871">
    <property type="entry name" value="ABC_transporter-like_CS"/>
</dbReference>
<dbReference type="InterPro" id="IPR027417">
    <property type="entry name" value="P-loop_NTPase"/>
</dbReference>
<dbReference type="InterPro" id="IPR005670">
    <property type="entry name" value="PstB-like"/>
</dbReference>
<dbReference type="NCBIfam" id="TIGR00972">
    <property type="entry name" value="3a0107s01c2"/>
    <property type="match status" value="1"/>
</dbReference>
<dbReference type="PANTHER" id="PTHR43423">
    <property type="entry name" value="ABC TRANSPORTER I FAMILY MEMBER 17"/>
    <property type="match status" value="1"/>
</dbReference>
<dbReference type="PANTHER" id="PTHR43423:SF10">
    <property type="entry name" value="PHOSPHATE IMPORT ATP-BINDING PROTEIN PSTB 2"/>
    <property type="match status" value="1"/>
</dbReference>
<dbReference type="Pfam" id="PF00005">
    <property type="entry name" value="ABC_tran"/>
    <property type="match status" value="1"/>
</dbReference>
<dbReference type="SMART" id="SM00382">
    <property type="entry name" value="AAA"/>
    <property type="match status" value="1"/>
</dbReference>
<dbReference type="SUPFAM" id="SSF52540">
    <property type="entry name" value="P-loop containing nucleoside triphosphate hydrolases"/>
    <property type="match status" value="1"/>
</dbReference>
<dbReference type="PROSITE" id="PS00211">
    <property type="entry name" value="ABC_TRANSPORTER_1"/>
    <property type="match status" value="1"/>
</dbReference>
<dbReference type="PROSITE" id="PS50893">
    <property type="entry name" value="ABC_TRANSPORTER_2"/>
    <property type="match status" value="1"/>
</dbReference>
<dbReference type="PROSITE" id="PS51238">
    <property type="entry name" value="PSTB"/>
    <property type="match status" value="1"/>
</dbReference>
<organism>
    <name type="scientific">Ligilactobacillus salivarius (strain UCC118)</name>
    <name type="common">Lactobacillus salivarius</name>
    <dbReference type="NCBI Taxonomy" id="362948"/>
    <lineage>
        <taxon>Bacteria</taxon>
        <taxon>Bacillati</taxon>
        <taxon>Bacillota</taxon>
        <taxon>Bacilli</taxon>
        <taxon>Lactobacillales</taxon>
        <taxon>Lactobacillaceae</taxon>
        <taxon>Ligilactobacillus</taxon>
    </lineage>
</organism>
<comment type="function">
    <text evidence="1">Part of the ABC transporter complex PstSACB involved in phosphate import. Responsible for energy coupling to the transport system.</text>
</comment>
<comment type="catalytic activity">
    <reaction evidence="1">
        <text>phosphate(out) + ATP + H2O = ADP + 2 phosphate(in) + H(+)</text>
        <dbReference type="Rhea" id="RHEA:24440"/>
        <dbReference type="ChEBI" id="CHEBI:15377"/>
        <dbReference type="ChEBI" id="CHEBI:15378"/>
        <dbReference type="ChEBI" id="CHEBI:30616"/>
        <dbReference type="ChEBI" id="CHEBI:43474"/>
        <dbReference type="ChEBI" id="CHEBI:456216"/>
        <dbReference type="EC" id="7.3.2.1"/>
    </reaction>
</comment>
<comment type="subunit">
    <text evidence="1">The complex is composed of two ATP-binding proteins (PstB), two transmembrane proteins (PstC and PstA) and a solute-binding protein (PstS).</text>
</comment>
<comment type="subcellular location">
    <subcellularLocation>
        <location evidence="1">Cell membrane</location>
        <topology evidence="1">Peripheral membrane protein</topology>
    </subcellularLocation>
</comment>
<comment type="similarity">
    <text evidence="1">Belongs to the ABC transporter superfamily. Phosphate importer (TC 3.A.1.7) family.</text>
</comment>
<keyword id="KW-0067">ATP-binding</keyword>
<keyword id="KW-1003">Cell membrane</keyword>
<keyword id="KW-0472">Membrane</keyword>
<keyword id="KW-0547">Nucleotide-binding</keyword>
<keyword id="KW-0592">Phosphate transport</keyword>
<keyword id="KW-1185">Reference proteome</keyword>
<keyword id="KW-1278">Translocase</keyword>
<keyword id="KW-0813">Transport</keyword>
<gene>
    <name evidence="1" type="primary">pstB1</name>
    <name type="ordered locus">LSL_0403</name>
</gene>
<reference key="1">
    <citation type="journal article" date="2006" name="Proc. Natl. Acad. Sci. U.S.A.">
        <title>Multireplicon genome architecture of Lactobacillus salivarius.</title>
        <authorList>
            <person name="Claesson M.J."/>
            <person name="Li Y."/>
            <person name="Leahy S."/>
            <person name="Canchaya C."/>
            <person name="van Pijkeren J.P."/>
            <person name="Cerdeno-Tarraga A.M."/>
            <person name="Parkhill J."/>
            <person name="Flynn S."/>
            <person name="O'Sullivan G.C."/>
            <person name="Collins J.K."/>
            <person name="Higgins D."/>
            <person name="Shanahan F."/>
            <person name="Fitzgerald G.F."/>
            <person name="van Sinderen D."/>
            <person name="O'Toole P.W."/>
        </authorList>
    </citation>
    <scope>NUCLEOTIDE SEQUENCE [LARGE SCALE GENOMIC DNA]</scope>
    <source>
        <strain>UCC118</strain>
    </source>
</reference>
<proteinExistence type="inferred from homology"/>
<evidence type="ECO:0000255" key="1">
    <source>
        <dbReference type="HAMAP-Rule" id="MF_01702"/>
    </source>
</evidence>